<keyword id="KW-0472">Membrane</keyword>
<keyword id="KW-0496">Mitochondrion</keyword>
<keyword id="KW-0999">Mitochondrion inner membrane</keyword>
<keyword id="KW-1278">Translocase</keyword>
<keyword id="KW-0812">Transmembrane</keyword>
<keyword id="KW-1133">Transmembrane helix</keyword>
<comment type="function">
    <text evidence="2">Component of the cytochrome c oxidase, the last enzyme in the mitochondrial electron transport chain which drives oxidative phosphorylation. The respiratory chain contains 3 multisubunit complexes succinate dehydrogenase (complex II, CII), ubiquinol-cytochrome c oxidoreductase (cytochrome b-c1 complex, complex III, CIII) and cytochrome c oxidase (complex IV, CIV), that cooperate to transfer electrons derived from NADH and succinate to molecular oxygen, creating an electrochemical gradient over the inner membrane that drives transmembrane transport and the ATP synthase. Cytochrome c oxidase is the component of the respiratory chain that catalyzes the reduction of oxygen to water. Electrons originating from reduced cytochrome c in the intermembrane space (IMS) are transferred via the dinuclear copper A center (CU(A)) of subunit 2 and heme A of subunit 1 to the active site in subunit 1, a binuclear center (BNC) formed by heme A3 and copper B (CU(B)). The BNC reduces molecular oxygen to 2 water molecules using 4 electrons from cytochrome c in the IMS and 4 protons from the mitochondrial matrix.</text>
</comment>
<comment type="catalytic activity">
    <reaction evidence="2">
        <text>4 Fe(II)-[cytochrome c] + O2 + 8 H(+)(in) = 4 Fe(III)-[cytochrome c] + 2 H2O + 4 H(+)(out)</text>
        <dbReference type="Rhea" id="RHEA:11436"/>
        <dbReference type="Rhea" id="RHEA-COMP:10350"/>
        <dbReference type="Rhea" id="RHEA-COMP:14399"/>
        <dbReference type="ChEBI" id="CHEBI:15377"/>
        <dbReference type="ChEBI" id="CHEBI:15378"/>
        <dbReference type="ChEBI" id="CHEBI:15379"/>
        <dbReference type="ChEBI" id="CHEBI:29033"/>
        <dbReference type="ChEBI" id="CHEBI:29034"/>
        <dbReference type="EC" id="7.1.1.9"/>
    </reaction>
    <physiologicalReaction direction="left-to-right" evidence="2">
        <dbReference type="Rhea" id="RHEA:11437"/>
    </physiologicalReaction>
</comment>
<comment type="subunit">
    <text evidence="1">Component of the cytochrome c oxidase (complex IV, CIV), a multisubunit enzyme composed of 14 subunits. The complex is composed of a catalytic core of 3 subunits MT-CO1, MT-CO2 and MT-CO3, encoded in the mitochondrial DNA, and 11 supernumerary subunits COX4I, COX5A, COX5B, COX6A, COX6B, COX6C, COX7A, COX7B, COX7C, COX8 and NDUFA4, which are encoded in the nuclear genome. The complex exists as a monomer or a dimer and forms supercomplexes (SCs) in the inner mitochondrial membrane with NADH-ubiquinone oxidoreductase (complex I, CI) and ubiquinol-cytochrome c oxidoreductase (cytochrome b-c1 complex, complex III, CIII), resulting in different assemblies (supercomplex SCI(1)III(2)IV(1) and megacomplex MCI(2)III(2)IV(2)).</text>
</comment>
<comment type="subcellular location">
    <subcellularLocation>
        <location evidence="1">Mitochondrion inner membrane</location>
        <topology evidence="1">Multi-pass membrane protein</topology>
    </subcellularLocation>
</comment>
<comment type="similarity">
    <text evidence="3">Belongs to the cytochrome c oxidase subunit 3 family.</text>
</comment>
<evidence type="ECO:0000250" key="1">
    <source>
        <dbReference type="UniProtKB" id="P00415"/>
    </source>
</evidence>
<evidence type="ECO:0000250" key="2">
    <source>
        <dbReference type="UniProtKB" id="P00420"/>
    </source>
</evidence>
<evidence type="ECO:0000305" key="3"/>
<geneLocation type="mitochondrion"/>
<reference key="1">
    <citation type="journal article" date="2005" name="Mol. Phylogenet. Evol.">
        <title>A phylogeny of the Caniformia (order Carnivora) based on 12 complete protein-coding mitochondrial genes.</title>
        <authorList>
            <person name="Delisle I."/>
            <person name="Strobeck C."/>
        </authorList>
    </citation>
    <scope>NUCLEOTIDE SEQUENCE [GENOMIC DNA]</scope>
</reference>
<reference key="2">
    <citation type="journal article" date="2006" name="Genome Res.">
        <title>Relaxation of selective constraint on dog mitochondrial DNA following domestication.</title>
        <authorList>
            <person name="Bjornerfeldt S."/>
            <person name="Webster M.T."/>
            <person name="Vila C."/>
        </authorList>
    </citation>
    <scope>NUCLEOTIDE SEQUENCE [GENOMIC DNA]</scope>
</reference>
<proteinExistence type="inferred from homology"/>
<gene>
    <name type="primary">MT-CO3</name>
    <name type="synonym">COIII</name>
    <name type="synonym">COXIII</name>
    <name type="synonym">MTCO3</name>
</gene>
<protein>
    <recommendedName>
        <fullName>Cytochrome c oxidase subunit 3</fullName>
        <ecNumber>7.1.1.9</ecNumber>
    </recommendedName>
    <alternativeName>
        <fullName>Cytochrome c oxidase polypeptide III</fullName>
    </alternativeName>
</protein>
<feature type="chain" id="PRO_0000269705" description="Cytochrome c oxidase subunit 3">
    <location>
        <begin position="1"/>
        <end position="261"/>
    </location>
</feature>
<feature type="topological domain" description="Mitochondrial matrix" evidence="1">
    <location>
        <begin position="1"/>
        <end position="15"/>
    </location>
</feature>
<feature type="transmembrane region" description="Helical; Name=I" evidence="1">
    <location>
        <begin position="16"/>
        <end position="34"/>
    </location>
</feature>
<feature type="topological domain" description="Mitochondrial intermembrane" evidence="1">
    <location>
        <begin position="35"/>
        <end position="40"/>
    </location>
</feature>
<feature type="transmembrane region" description="Helical; Name=II" evidence="1">
    <location>
        <begin position="41"/>
        <end position="66"/>
    </location>
</feature>
<feature type="topological domain" description="Mitochondrial matrix" evidence="1">
    <location>
        <begin position="67"/>
        <end position="72"/>
    </location>
</feature>
<feature type="transmembrane region" description="Helical; Name=III" evidence="1">
    <location>
        <begin position="73"/>
        <end position="105"/>
    </location>
</feature>
<feature type="topological domain" description="Mitochondrial intermembrane" evidence="1">
    <location>
        <begin position="106"/>
        <end position="128"/>
    </location>
</feature>
<feature type="transmembrane region" description="Helical; Name=IV" evidence="1">
    <location>
        <begin position="129"/>
        <end position="152"/>
    </location>
</feature>
<feature type="topological domain" description="Mitochondrial matrix" evidence="1">
    <location>
        <begin position="153"/>
        <end position="155"/>
    </location>
</feature>
<feature type="transmembrane region" description="Helical; Name=V" evidence="1">
    <location>
        <begin position="156"/>
        <end position="183"/>
    </location>
</feature>
<feature type="topological domain" description="Mitochondrial intermembrane" evidence="1">
    <location>
        <begin position="184"/>
        <end position="190"/>
    </location>
</feature>
<feature type="transmembrane region" description="Helical; Name=VI" evidence="1">
    <location>
        <begin position="191"/>
        <end position="223"/>
    </location>
</feature>
<feature type="topological domain" description="Mitochondrial matrix" evidence="1">
    <location>
        <begin position="224"/>
        <end position="232"/>
    </location>
</feature>
<feature type="transmembrane region" description="Helical; Name=VII" evidence="1">
    <location>
        <begin position="233"/>
        <end position="256"/>
    </location>
</feature>
<feature type="topological domain" description="Mitochondrial intermembrane" evidence="1">
    <location>
        <begin position="257"/>
        <end position="261"/>
    </location>
</feature>
<feature type="sequence variant">
    <original>V</original>
    <variation>I</variation>
    <location>
        <position position="84"/>
    </location>
</feature>
<organism>
    <name type="scientific">Canis lupus</name>
    <name type="common">Gray wolf</name>
    <dbReference type="NCBI Taxonomy" id="9612"/>
    <lineage>
        <taxon>Eukaryota</taxon>
        <taxon>Metazoa</taxon>
        <taxon>Chordata</taxon>
        <taxon>Craniata</taxon>
        <taxon>Vertebrata</taxon>
        <taxon>Euteleostomi</taxon>
        <taxon>Mammalia</taxon>
        <taxon>Eutheria</taxon>
        <taxon>Laurasiatheria</taxon>
        <taxon>Carnivora</taxon>
        <taxon>Caniformia</taxon>
        <taxon>Canidae</taxon>
        <taxon>Canis</taxon>
    </lineage>
</organism>
<name>COX3_CANLU</name>
<accession>Q1HK97</accession>
<accession>Q3L6Z0</accession>
<dbReference type="EC" id="7.1.1.9"/>
<dbReference type="EMBL" id="AY598498">
    <property type="protein sequence ID" value="AAU00444.1"/>
    <property type="molecule type" value="Genomic_DNA"/>
</dbReference>
<dbReference type="EMBL" id="DQ480503">
    <property type="protein sequence ID" value="ABE48161.1"/>
    <property type="molecule type" value="Genomic_DNA"/>
</dbReference>
<dbReference type="EMBL" id="DQ480504">
    <property type="protein sequence ID" value="ABE48174.1"/>
    <property type="molecule type" value="Genomic_DNA"/>
</dbReference>
<dbReference type="EMBL" id="DQ480505">
    <property type="protein sequence ID" value="ABE48187.1"/>
    <property type="molecule type" value="Genomic_DNA"/>
</dbReference>
<dbReference type="EMBL" id="DQ480506">
    <property type="protein sequence ID" value="ABE48200.1"/>
    <property type="molecule type" value="Genomic_DNA"/>
</dbReference>
<dbReference type="EMBL" id="DQ480507">
    <property type="protein sequence ID" value="ABE48213.1"/>
    <property type="molecule type" value="Genomic_DNA"/>
</dbReference>
<dbReference type="EMBL" id="DQ480508">
    <property type="protein sequence ID" value="ABE48226.1"/>
    <property type="molecule type" value="Genomic_DNA"/>
</dbReference>
<dbReference type="SMR" id="Q1HK97"/>
<dbReference type="CTD" id="4514"/>
<dbReference type="GO" id="GO:0005743">
    <property type="term" value="C:mitochondrial inner membrane"/>
    <property type="evidence" value="ECO:0007669"/>
    <property type="project" value="UniProtKB-SubCell"/>
</dbReference>
<dbReference type="GO" id="GO:0045277">
    <property type="term" value="C:respiratory chain complex IV"/>
    <property type="evidence" value="ECO:0000250"/>
    <property type="project" value="UniProtKB"/>
</dbReference>
<dbReference type="GO" id="GO:0004129">
    <property type="term" value="F:cytochrome-c oxidase activity"/>
    <property type="evidence" value="ECO:0007669"/>
    <property type="project" value="UniProtKB-EC"/>
</dbReference>
<dbReference type="GO" id="GO:0006123">
    <property type="term" value="P:mitochondrial electron transport, cytochrome c to oxygen"/>
    <property type="evidence" value="ECO:0007669"/>
    <property type="project" value="TreeGrafter"/>
</dbReference>
<dbReference type="GO" id="GO:0008535">
    <property type="term" value="P:respiratory chain complex IV assembly"/>
    <property type="evidence" value="ECO:0000250"/>
    <property type="project" value="UniProtKB"/>
</dbReference>
<dbReference type="CDD" id="cd01665">
    <property type="entry name" value="Cyt_c_Oxidase_III"/>
    <property type="match status" value="1"/>
</dbReference>
<dbReference type="FunFam" id="1.10.287.70:FF:000048">
    <property type="entry name" value="Cytochrome c oxidase subunit 3"/>
    <property type="match status" value="1"/>
</dbReference>
<dbReference type="FunFam" id="1.20.120.80:FF:000002">
    <property type="entry name" value="Cytochrome c oxidase subunit 3"/>
    <property type="match status" value="1"/>
</dbReference>
<dbReference type="Gene3D" id="1.10.287.70">
    <property type="match status" value="1"/>
</dbReference>
<dbReference type="Gene3D" id="1.20.120.80">
    <property type="entry name" value="Cytochrome c oxidase, subunit III, four-helix bundle"/>
    <property type="match status" value="1"/>
</dbReference>
<dbReference type="InterPro" id="IPR024791">
    <property type="entry name" value="Cyt_c/ubiquinol_Oxase_su3"/>
</dbReference>
<dbReference type="InterPro" id="IPR033945">
    <property type="entry name" value="Cyt_c_oxase_su3_dom"/>
</dbReference>
<dbReference type="InterPro" id="IPR000298">
    <property type="entry name" value="Cyt_c_oxidase-like_su3"/>
</dbReference>
<dbReference type="InterPro" id="IPR035973">
    <property type="entry name" value="Cyt_c_oxidase_su3-like_sf"/>
</dbReference>
<dbReference type="InterPro" id="IPR013833">
    <property type="entry name" value="Cyt_c_oxidase_su3_a-hlx"/>
</dbReference>
<dbReference type="PANTHER" id="PTHR11403:SF7">
    <property type="entry name" value="CYTOCHROME C OXIDASE SUBUNIT 3"/>
    <property type="match status" value="1"/>
</dbReference>
<dbReference type="PANTHER" id="PTHR11403">
    <property type="entry name" value="CYTOCHROME C OXIDASE SUBUNIT III"/>
    <property type="match status" value="1"/>
</dbReference>
<dbReference type="Pfam" id="PF00510">
    <property type="entry name" value="COX3"/>
    <property type="match status" value="1"/>
</dbReference>
<dbReference type="SUPFAM" id="SSF81452">
    <property type="entry name" value="Cytochrome c oxidase subunit III-like"/>
    <property type="match status" value="1"/>
</dbReference>
<dbReference type="PROSITE" id="PS50253">
    <property type="entry name" value="COX3"/>
    <property type="match status" value="1"/>
</dbReference>
<sequence>MTHQTHAYHMVNPSPWPLTGALSALLMTSGLIMWFHYNSMSLLTLGFTTNLLTMYQWWRDVIREGTFQGHHTPIVQKGLRYGMVLFIVSEVFFFAGFFWAFYHSSLAPTPELGGCWPPTGIIPLNPLEVPLLNTSVLLASGVSITWAHHSLMEGNRKHMLQALFITISLGVYFTLLQASEYYETSFTISDGVYGSTFFMATGFHGLHVIIGSTFLIVCFLRQLYYHFTSNHHFGFEAAAWYWHFVDVVWLFLYVSIYWWGS</sequence>